<reference key="1">
    <citation type="journal article" date="2002" name="Mol. Microbiol.">
        <title>An accessory sec locus of Streptococcus gordonii is required for export of the surface protein GspB and for normal levels of binding to human platelets.</title>
        <authorList>
            <person name="Bensing B.A."/>
            <person name="Sullam P.M."/>
        </authorList>
    </citation>
    <scope>NUCLEOTIDE SEQUENCE [GENOMIC DNA]</scope>
    <source>
        <strain>M99</strain>
    </source>
</reference>
<reference key="2">
    <citation type="journal article" date="2004" name="Mol. Microbiol.">
        <title>Genes in the accessory sec locus of Streptococcus gordonii have three functionally distinct effects on the expression of the platelet-binding protein GspB.</title>
        <authorList>
            <person name="Takamatsu D."/>
            <person name="Bensing B.A."/>
            <person name="Sullam P.M."/>
        </authorList>
    </citation>
    <scope>DISRUPTION PHENOTYPE</scope>
    <source>
        <strain>M99</strain>
    </source>
</reference>
<reference key="3">
    <citation type="journal article" date="2004" name="J. Bacteriol.">
        <title>Four proteins encoded in the gspB-secY2A2 operon of Streptococcus gordonii mediate the intracellular glycosylation of the platelet-binding protein GspB.</title>
        <authorList>
            <person name="Takamatsu D."/>
            <person name="Bensing B.A."/>
            <person name="Sullam P.M."/>
        </authorList>
    </citation>
    <scope>FUNCTION</scope>
    <scope>PATHWAY</scope>
    <scope>DISRUPTION PHENOTYPE</scope>
    <source>
        <strain>M99</strain>
    </source>
</reference>
<reference evidence="9 10" key="4">
    <citation type="journal article" date="2016" name="Proc. Natl. Acad. Sci. U.S.A.">
        <title>Mechanism of a cytosolic O-glycosyltransferase essential for the synthesis of a bacterial adhesion protein.</title>
        <authorList>
            <person name="Chen Y."/>
            <person name="Seepersaud R."/>
            <person name="Bensing B.A."/>
            <person name="Sullam P.M."/>
            <person name="Rapoport T.A."/>
        </authorList>
    </citation>
    <scope>X-RAY CRYSTALLOGRAPHY (2.92 ANGSTROMS) OF 1-447 IN COMPLEX WITH GTFA</scope>
    <scope>FUNCTION</scope>
    <scope>POSSIBLE REACTION MECHANISM</scope>
    <scope>PATHWAY</scope>
    <scope>SUBUNIT</scope>
    <scope>MUTAGENESIS OF ASP-6; ASP-14; LYS-111 AND GLU-222</scope>
    <source>
        <strain>M99</strain>
    </source>
</reference>
<comment type="function">
    <text evidence="3 8">Required for polymorphic O-glycosylation of GspB, a serine-rich repeat cell wall protein encoded upstream in the same operon. A substrate-binding protein that is part of the accessory SecA2/SecY2 system specifically required to export GspB. The GtfA-GtfB complex adds GlcNAc from UDP-GlcNAc to GspB, attaching the first sugar residue. Upon coexpression in E.coli with GtfA glycosylates GspB constructs (PubMed:15489421). Binds the GspB protein substrate; alone this subunit only recognizes partially glycosylated GspB, but is constrained by GtfA to also recognize unglycosylated protein. The enzyme probably modifies its tertiary conformation by opening and closing its intersubunit interfaces to accomodate the increasingly glycosylated substrate (Probable).</text>
</comment>
<comment type="pathway">
    <text evidence="1 3 4">Protein modification; protein glycosylation.</text>
</comment>
<comment type="subunit">
    <text evidence="4 7 8">Forms a heterotetramer with 2 subunits each of GtfA and GtfB (PubMed:26884191). Part of the accessory SecA2/SecY2 protein translocation apparatus required to export cell wall protein GspB (Probable).</text>
</comment>
<comment type="subcellular location">
    <subcellularLocation>
        <location evidence="1">Cell membrane</location>
        <topology evidence="1">Peripheral membrane protein</topology>
    </subcellularLocation>
</comment>
<comment type="disruption phenotype">
    <text evidence="2 3">Loss of export of cell wall protein GspB; transcription should not be affected. Non-glycosylated GspB may form aggregates.</text>
</comment>
<comment type="similarity">
    <text evidence="6">Belongs to the GtfB family.</text>
</comment>
<protein>
    <recommendedName>
        <fullName evidence="1">UDP-N-acetylglucosamine--peptide N-acetylglucosaminyltransferase stabilizing protein GtfB</fullName>
    </recommendedName>
    <alternativeName>
        <fullName evidence="1">Glycosyltransferase stabilizing protein GtfB</fullName>
    </alternativeName>
    <alternativeName>
        <fullName>orf4</fullName>
    </alternativeName>
</protein>
<sequence length="450" mass="51531">MIQLFDYYNQETQDLHDSLLAAGYACPTIVIEANGFLPDDMISPYTYFLGDEEGVDHPLFFNQVPVPPFWEITGDHQVARVSDMGEERARIHYASQARGRLVKQVDWLDKKGQLRLSERYNKQGRCFAKTAYKSGQEAFNTTYYSTDGQERIVENHVTGDIILTLDQEPLRIFKSRVDFIRFFLERLDLDLDHILFNSLAYSFLVSHSLTGRAGQDILFWQEPLYDELPGNMQLILDNSQLRTQTIVIPDLATYEKAMSLAAADQQQKFLHLGYHYDFKRDNYLRKDALILTHSDQIEGLDTLVQSLPQLVFRIAALTEMSPKLLSMLSYKNVVLYQNASLKQIEQLYLESDIYLDINHGGQVLQAVRKAFENNLLILGFEQTLHDRHYIAQQHIFDSSQPAQLASILEEALCGVEQMRSALQAQGRHANDVPVSLYQETLQSLLGGQHG</sequence>
<keyword id="KW-0002">3D-structure</keyword>
<keyword id="KW-1003">Cell membrane</keyword>
<keyword id="KW-0472">Membrane</keyword>
<organism>
    <name type="scientific">Streptococcus gordonii</name>
    <dbReference type="NCBI Taxonomy" id="1302"/>
    <lineage>
        <taxon>Bacteria</taxon>
        <taxon>Bacillati</taxon>
        <taxon>Bacillota</taxon>
        <taxon>Bacilli</taxon>
        <taxon>Lactobacillales</taxon>
        <taxon>Streptococcaceae</taxon>
        <taxon>Streptococcus</taxon>
    </lineage>
</organism>
<evidence type="ECO:0000255" key="1">
    <source>
        <dbReference type="HAMAP-Rule" id="MF_01473"/>
    </source>
</evidence>
<evidence type="ECO:0000269" key="2">
    <source>
    </source>
</evidence>
<evidence type="ECO:0000269" key="3">
    <source>
    </source>
</evidence>
<evidence type="ECO:0000269" key="4">
    <source>
    </source>
</evidence>
<evidence type="ECO:0000303" key="5">
    <source>
    </source>
</evidence>
<evidence type="ECO:0000305" key="6"/>
<evidence type="ECO:0000305" key="7">
    <source>
    </source>
</evidence>
<evidence type="ECO:0000305" key="8">
    <source>
    </source>
</evidence>
<evidence type="ECO:0007744" key="9">
    <source>
        <dbReference type="PDB" id="5E9T"/>
    </source>
</evidence>
<evidence type="ECO:0007744" key="10">
    <source>
        <dbReference type="PDB" id="5E9U"/>
    </source>
</evidence>
<evidence type="ECO:0007829" key="11">
    <source>
        <dbReference type="PDB" id="5E9T"/>
    </source>
</evidence>
<name>GTFB_STRGN</name>
<gene>
    <name evidence="1 5" type="primary">gtfB</name>
</gene>
<feature type="chain" id="PRO_0000414595" description="UDP-N-acetylglucosamine--peptide N-acetylglucosaminyltransferase stabilizing protein GtfB">
    <location>
        <begin position="1"/>
        <end position="450"/>
    </location>
</feature>
<feature type="mutagenesis site" description="Defect in early glycosylation of GspB, decreased binding of partially glycosylated GspB. Nearly complete loss of glycosylation and binding to partially glycosylated GspB; when associated with A-14 and A-222." evidence="4">
    <original>D</original>
    <variation>A</variation>
    <location>
        <position position="6"/>
    </location>
</feature>
<feature type="mutagenesis site" description="Mild defect in early glycosylation of GspB. Nearly complete loss of glycosylation and binding to partially glycosylated GspB; when associated with A-6 and A-222." evidence="4">
    <original>D</original>
    <variation>A</variation>
    <location>
        <position position="14"/>
    </location>
</feature>
<feature type="mutagenesis site" description="Increased GspB glycosylation, probably forms an intra-subunit disulfide bond that increases tetramerization." evidence="4">
    <original>K</original>
    <variation>C</variation>
    <location>
        <position position="111"/>
    </location>
</feature>
<feature type="mutagenesis site" description="Significant defect in glycosylation of GspB in vivo and in vitro, significantly decreased binding of partially glycosylated GspB. Nearly complete loss of glycosylation and binding to partially glycosylated GspB; when associated with A-14 and A-16." evidence="4">
    <original>E</original>
    <variation>A</variation>
    <location>
        <position position="222"/>
    </location>
</feature>
<feature type="strand" evidence="11">
    <location>
        <begin position="2"/>
        <end position="7"/>
    </location>
</feature>
<feature type="helix" evidence="11">
    <location>
        <begin position="10"/>
        <end position="21"/>
    </location>
</feature>
<feature type="strand" evidence="11">
    <location>
        <begin position="28"/>
        <end position="30"/>
    </location>
</feature>
<feature type="helix" evidence="11">
    <location>
        <begin position="44"/>
        <end position="47"/>
    </location>
</feature>
<feature type="helix" evidence="11">
    <location>
        <begin position="61"/>
        <end position="63"/>
    </location>
</feature>
<feature type="strand" evidence="11">
    <location>
        <begin position="71"/>
        <end position="74"/>
    </location>
</feature>
<feature type="strand" evidence="11">
    <location>
        <begin position="79"/>
        <end position="83"/>
    </location>
</feature>
<feature type="strand" evidence="11">
    <location>
        <begin position="86"/>
        <end position="94"/>
    </location>
</feature>
<feature type="strand" evidence="11">
    <location>
        <begin position="96"/>
        <end position="108"/>
    </location>
</feature>
<feature type="strand" evidence="11">
    <location>
        <begin position="114"/>
        <end position="120"/>
    </location>
</feature>
<feature type="strand" evidence="11">
    <location>
        <begin position="126"/>
        <end position="132"/>
    </location>
</feature>
<feature type="strand" evidence="11">
    <location>
        <begin position="138"/>
        <end position="144"/>
    </location>
</feature>
<feature type="strand" evidence="11">
    <location>
        <begin position="148"/>
        <end position="155"/>
    </location>
</feature>
<feature type="turn" evidence="11">
    <location>
        <begin position="156"/>
        <end position="158"/>
    </location>
</feature>
<feature type="strand" evidence="11">
    <location>
        <begin position="161"/>
        <end position="163"/>
    </location>
</feature>
<feature type="strand" evidence="11">
    <location>
        <begin position="170"/>
        <end position="175"/>
    </location>
</feature>
<feature type="helix" evidence="11">
    <location>
        <begin position="176"/>
        <end position="186"/>
    </location>
</feature>
<feature type="strand" evidence="11">
    <location>
        <begin position="194"/>
        <end position="197"/>
    </location>
</feature>
<feature type="helix" evidence="11">
    <location>
        <begin position="201"/>
        <end position="207"/>
    </location>
</feature>
<feature type="turn" evidence="11">
    <location>
        <begin position="208"/>
        <end position="211"/>
    </location>
</feature>
<feature type="strand" evidence="11">
    <location>
        <begin position="216"/>
        <end position="219"/>
    </location>
</feature>
<feature type="helix" evidence="11">
    <location>
        <begin position="230"/>
        <end position="237"/>
    </location>
</feature>
<feature type="strand" evidence="11">
    <location>
        <begin position="239"/>
        <end position="247"/>
    </location>
</feature>
<feature type="helix" evidence="11">
    <location>
        <begin position="251"/>
        <end position="260"/>
    </location>
</feature>
<feature type="helix" evidence="11">
    <location>
        <begin position="264"/>
        <end position="268"/>
    </location>
</feature>
<feature type="strand" evidence="11">
    <location>
        <begin position="286"/>
        <end position="291"/>
    </location>
</feature>
<feature type="strand" evidence="11">
    <location>
        <begin position="293"/>
        <end position="295"/>
    </location>
</feature>
<feature type="helix" evidence="11">
    <location>
        <begin position="300"/>
        <end position="306"/>
    </location>
</feature>
<feature type="strand" evidence="11">
    <location>
        <begin position="310"/>
        <end position="315"/>
    </location>
</feature>
<feature type="helix" evidence="11">
    <location>
        <begin position="322"/>
        <end position="325"/>
    </location>
</feature>
<feature type="helix" evidence="11">
    <location>
        <begin position="327"/>
        <end position="329"/>
    </location>
</feature>
<feature type="strand" evidence="11">
    <location>
        <begin position="333"/>
        <end position="338"/>
    </location>
</feature>
<feature type="helix" evidence="11">
    <location>
        <begin position="341"/>
        <end position="350"/>
    </location>
</feature>
<feature type="strand" evidence="11">
    <location>
        <begin position="352"/>
        <end position="356"/>
    </location>
</feature>
<feature type="strand" evidence="11">
    <location>
        <begin position="359"/>
        <end position="361"/>
    </location>
</feature>
<feature type="helix" evidence="11">
    <location>
        <begin position="366"/>
        <end position="372"/>
    </location>
</feature>
<feature type="strand" evidence="11">
    <location>
        <begin position="376"/>
        <end position="379"/>
    </location>
</feature>
<feature type="turn" evidence="11">
    <location>
        <begin position="392"/>
        <end position="394"/>
    </location>
</feature>
<feature type="turn" evidence="11">
    <location>
        <begin position="400"/>
        <end position="404"/>
    </location>
</feature>
<feature type="helix" evidence="11">
    <location>
        <begin position="405"/>
        <end position="409"/>
    </location>
</feature>
<feature type="turn" evidence="11">
    <location>
        <begin position="410"/>
        <end position="412"/>
    </location>
</feature>
<feature type="helix" evidence="11">
    <location>
        <begin position="415"/>
        <end position="428"/>
    </location>
</feature>
<feature type="helix" evidence="11">
    <location>
        <begin position="434"/>
        <end position="442"/>
    </location>
</feature>
<proteinExistence type="evidence at protein level"/>
<accession>Q79T00</accession>
<dbReference type="EMBL" id="AY028381">
    <property type="protein sequence ID" value="AAS86345.1"/>
    <property type="molecule type" value="Genomic_DNA"/>
</dbReference>
<dbReference type="PDB" id="5E9T">
    <property type="method" value="X-ray"/>
    <property type="resolution" value="2.92 A"/>
    <property type="chains" value="B/D=1-447"/>
</dbReference>
<dbReference type="PDB" id="5E9U">
    <property type="method" value="X-ray"/>
    <property type="resolution" value="3.84 A"/>
    <property type="chains" value="B/D/F/H=1-446"/>
</dbReference>
<dbReference type="PDBsum" id="5E9T"/>
<dbReference type="PDBsum" id="5E9U"/>
<dbReference type="SMR" id="Q79T00"/>
<dbReference type="CAZy" id="GT8">
    <property type="family name" value="Glycosyltransferase Family 8"/>
</dbReference>
<dbReference type="UniPathway" id="UPA00378"/>
<dbReference type="EvolutionaryTrace" id="Q79T00"/>
<dbReference type="GO" id="GO:0005886">
    <property type="term" value="C:plasma membrane"/>
    <property type="evidence" value="ECO:0007669"/>
    <property type="project" value="UniProtKB-SubCell"/>
</dbReference>
<dbReference type="GO" id="GO:0017122">
    <property type="term" value="C:protein N-acetylglucosaminyltransferase complex"/>
    <property type="evidence" value="ECO:0000314"/>
    <property type="project" value="UniProtKB"/>
</dbReference>
<dbReference type="GO" id="GO:0018242">
    <property type="term" value="P:protein O-linked glycosylation via serine"/>
    <property type="evidence" value="ECO:0007669"/>
    <property type="project" value="UniProtKB-UniRule"/>
</dbReference>
<dbReference type="GO" id="GO:0031647">
    <property type="term" value="P:regulation of protein stability"/>
    <property type="evidence" value="ECO:0007669"/>
    <property type="project" value="UniProtKB-UniRule"/>
</dbReference>
<dbReference type="HAMAP" id="MF_01473">
    <property type="entry name" value="GtfB"/>
    <property type="match status" value="1"/>
</dbReference>
<dbReference type="InterPro" id="IPR014268">
    <property type="entry name" value="GtfB"/>
</dbReference>
<dbReference type="NCBIfam" id="TIGR02919">
    <property type="entry name" value="accessory Sec system glycosylation chaperone GtfB"/>
    <property type="match status" value="1"/>
</dbReference>